<reference key="1">
    <citation type="journal article" date="1993" name="Yeast">
        <title>Molecular genetics in Saccharomyces kluyveri: the HIS3 homolog and its use as a selectable marker gene in S. kluyveri and Saccharomyces cerevisiae.</title>
        <authorList>
            <person name="Weinstock K.G."/>
            <person name="Strathern J.N."/>
        </authorList>
    </citation>
    <scope>NUCLEOTIDE SEQUENCE [GENOMIC DNA]</scope>
    <source>
        <strain>ATCC 58438 / CBS 3082 / BCRC 21498 / NBRC 1685 / JCM 7257 / NCYC 543 / NRRL Y-12651</strain>
    </source>
</reference>
<evidence type="ECO:0000250" key="1">
    <source>
        <dbReference type="UniProtKB" id="P25270"/>
    </source>
</evidence>
<evidence type="ECO:0000255" key="2"/>
<evidence type="ECO:0000256" key="3">
    <source>
        <dbReference type="SAM" id="MobiDB-lite"/>
    </source>
</evidence>
<evidence type="ECO:0000305" key="4"/>
<evidence type="ECO:0000312" key="5">
    <source>
        <dbReference type="EMBL" id="CAA78498.1"/>
    </source>
</evidence>
<name>MRM1_LACK1</name>
<comment type="function">
    <text evidence="1">S-adenosyl-L-methionine-dependent 2'-O-ribose methyltransferase that catalyzes the formation of the 2'-O-methylguanosine corresponding to position 2270 in S.cerevisiae 21S mitochondrial large ribosomal RNA, a universally conserved modification in the peptidyl transferase domain of the 21S rRNA.</text>
</comment>
<comment type="catalytic activity">
    <reaction evidence="1">
        <text>a guanosine in 21S rRNA + S-adenosyl-L-methionine = a 2'-O-methylguanosine in 21S rRNA + S-adenosyl-L-homocysteine + H(+)</text>
        <dbReference type="Rhea" id="RHEA:47772"/>
        <dbReference type="Rhea" id="RHEA-COMP:11907"/>
        <dbReference type="Rhea" id="RHEA-COMP:11908"/>
        <dbReference type="ChEBI" id="CHEBI:15378"/>
        <dbReference type="ChEBI" id="CHEBI:57856"/>
        <dbReference type="ChEBI" id="CHEBI:59789"/>
        <dbReference type="ChEBI" id="CHEBI:74269"/>
        <dbReference type="ChEBI" id="CHEBI:74445"/>
    </reaction>
</comment>
<comment type="subcellular location">
    <subcellularLocation>
        <location evidence="1">Mitochondrion</location>
    </subcellularLocation>
</comment>
<comment type="similarity">
    <text evidence="4">Belongs to the class IV-like SAM-binding methyltransferase superfamily. RNA methyltransferase TrmH family.</text>
</comment>
<protein>
    <recommendedName>
        <fullName evidence="1">rRNA methyltransferase 1, mitochondrial</fullName>
        <ecNumber evidence="1">2.1.1.-</ecNumber>
    </recommendedName>
    <alternativeName>
        <fullName evidence="1">21S rRNA (guanosine-2'O)-methyltransferase</fullName>
    </alternativeName>
    <alternativeName>
        <fullName evidence="1">Mitochondrial large ribosomal RNA ribose methylase</fullName>
    </alternativeName>
</protein>
<sequence length="138" mass="16188">MNNQPCSIVWRRFLTSKVKPAVRIPNENLKANKPTNFTKNFPLNERTKAWERAGEDKESWFKRKYAHVHAKQKSQPQVDLYGKKEAHYSRLKQDILSSKRQQEEHKSKYSRKSVTLGLRPNPLMEYIYGTNSVIAALN</sequence>
<feature type="transit peptide" description="Mitochondrion" evidence="2">
    <location>
        <begin position="1"/>
        <end position="21"/>
    </location>
</feature>
<feature type="chain" id="PRO_0000058320" description="rRNA methyltransferase 1, mitochondrial">
    <location>
        <begin position="22"/>
        <end position="138" status="greater than"/>
    </location>
</feature>
<feature type="region of interest" description="Disordered" evidence="3">
    <location>
        <begin position="92"/>
        <end position="113"/>
    </location>
</feature>
<feature type="non-terminal residue">
    <location>
        <position position="138"/>
    </location>
</feature>
<accession>Q02997</accession>
<proteinExistence type="inferred from homology"/>
<gene>
    <name evidence="1" type="primary">MRM1</name>
    <name evidence="5" type="synonym">PET56</name>
</gene>
<keyword id="KW-0489">Methyltransferase</keyword>
<keyword id="KW-0496">Mitochondrion</keyword>
<keyword id="KW-0698">rRNA processing</keyword>
<keyword id="KW-0949">S-adenosyl-L-methionine</keyword>
<keyword id="KW-0808">Transferase</keyword>
<keyword id="KW-0809">Transit peptide</keyword>
<dbReference type="EC" id="2.1.1.-" evidence="1"/>
<dbReference type="EMBL" id="Z14125">
    <property type="protein sequence ID" value="CAA78498.1"/>
    <property type="molecule type" value="Genomic_DNA"/>
</dbReference>
<dbReference type="PIR" id="S31234">
    <property type="entry name" value="S31234"/>
</dbReference>
<dbReference type="GO" id="GO:0005739">
    <property type="term" value="C:mitochondrion"/>
    <property type="evidence" value="ECO:0007669"/>
    <property type="project" value="UniProtKB-SubCell"/>
</dbReference>
<dbReference type="GO" id="GO:0008168">
    <property type="term" value="F:methyltransferase activity"/>
    <property type="evidence" value="ECO:0007669"/>
    <property type="project" value="UniProtKB-KW"/>
</dbReference>
<dbReference type="GO" id="GO:0032259">
    <property type="term" value="P:methylation"/>
    <property type="evidence" value="ECO:0007669"/>
    <property type="project" value="UniProtKB-KW"/>
</dbReference>
<dbReference type="GO" id="GO:0006364">
    <property type="term" value="P:rRNA processing"/>
    <property type="evidence" value="ECO:0007669"/>
    <property type="project" value="UniProtKB-KW"/>
</dbReference>
<organism>
    <name type="scientific">Lachancea kluyveri (strain ATCC 58438 / CBS 3082 / BCRC 21498 / NBRC 1685 / JCM 7257 / NCYC 543 / NRRL Y-12651)</name>
    <name type="common">Yeast</name>
    <name type="synonym">Saccharomyces kluyveri</name>
    <dbReference type="NCBI Taxonomy" id="226302"/>
    <lineage>
        <taxon>Eukaryota</taxon>
        <taxon>Fungi</taxon>
        <taxon>Dikarya</taxon>
        <taxon>Ascomycota</taxon>
        <taxon>Saccharomycotina</taxon>
        <taxon>Saccharomycetes</taxon>
        <taxon>Saccharomycetales</taxon>
        <taxon>Saccharomycetaceae</taxon>
        <taxon>Lachancea</taxon>
    </lineage>
</organism>